<name>HSSA_DICDI</name>
<gene>
    <name type="primary">hssA</name>
    <name type="ORF">DDB_G0293360</name>
</gene>
<proteinExistence type="evidence at transcript level"/>
<reference key="1">
    <citation type="journal article" date="2005" name="Nature">
        <title>The genome of the social amoeba Dictyostelium discoideum.</title>
        <authorList>
            <person name="Eichinger L."/>
            <person name="Pachebat J.A."/>
            <person name="Gloeckner G."/>
            <person name="Rajandream M.A."/>
            <person name="Sucgang R."/>
            <person name="Berriman M."/>
            <person name="Song J."/>
            <person name="Olsen R."/>
            <person name="Szafranski K."/>
            <person name="Xu Q."/>
            <person name="Tunggal B."/>
            <person name="Kummerfeld S."/>
            <person name="Madera M."/>
            <person name="Konfortov B.A."/>
            <person name="Rivero F."/>
            <person name="Bankier A.T."/>
            <person name="Lehmann R."/>
            <person name="Hamlin N."/>
            <person name="Davies R."/>
            <person name="Gaudet P."/>
            <person name="Fey P."/>
            <person name="Pilcher K."/>
            <person name="Chen G."/>
            <person name="Saunders D."/>
            <person name="Sodergren E.J."/>
            <person name="Davis P."/>
            <person name="Kerhornou A."/>
            <person name="Nie X."/>
            <person name="Hall N."/>
            <person name="Anjard C."/>
            <person name="Hemphill L."/>
            <person name="Bason N."/>
            <person name="Farbrother P."/>
            <person name="Desany B."/>
            <person name="Just E."/>
            <person name="Morio T."/>
            <person name="Rost R."/>
            <person name="Churcher C.M."/>
            <person name="Cooper J."/>
            <person name="Haydock S."/>
            <person name="van Driessche N."/>
            <person name="Cronin A."/>
            <person name="Goodhead I."/>
            <person name="Muzny D.M."/>
            <person name="Mourier T."/>
            <person name="Pain A."/>
            <person name="Lu M."/>
            <person name="Harper D."/>
            <person name="Lindsay R."/>
            <person name="Hauser H."/>
            <person name="James K.D."/>
            <person name="Quiles M."/>
            <person name="Madan Babu M."/>
            <person name="Saito T."/>
            <person name="Buchrieser C."/>
            <person name="Wardroper A."/>
            <person name="Felder M."/>
            <person name="Thangavelu M."/>
            <person name="Johnson D."/>
            <person name="Knights A."/>
            <person name="Loulseged H."/>
            <person name="Mungall K.L."/>
            <person name="Oliver K."/>
            <person name="Price C."/>
            <person name="Quail M.A."/>
            <person name="Urushihara H."/>
            <person name="Hernandez J."/>
            <person name="Rabbinowitsch E."/>
            <person name="Steffen D."/>
            <person name="Sanders M."/>
            <person name="Ma J."/>
            <person name="Kohara Y."/>
            <person name="Sharp S."/>
            <person name="Simmonds M.N."/>
            <person name="Spiegler S."/>
            <person name="Tivey A."/>
            <person name="Sugano S."/>
            <person name="White B."/>
            <person name="Walker D."/>
            <person name="Woodward J.R."/>
            <person name="Winckler T."/>
            <person name="Tanaka Y."/>
            <person name="Shaulsky G."/>
            <person name="Schleicher M."/>
            <person name="Weinstock G.M."/>
            <person name="Rosenthal A."/>
            <person name="Cox E.C."/>
            <person name="Chisholm R.L."/>
            <person name="Gibbs R.A."/>
            <person name="Loomis W.F."/>
            <person name="Platzer M."/>
            <person name="Kay R.R."/>
            <person name="Williams J.G."/>
            <person name="Dear P.H."/>
            <person name="Noegel A.A."/>
            <person name="Barrell B.G."/>
            <person name="Kuspa A."/>
        </authorList>
    </citation>
    <scope>NUCLEOTIDE SEQUENCE [LARGE SCALE GENOMIC DNA]</scope>
    <source>
        <strain>AX4</strain>
    </source>
</reference>
<reference key="2">
    <citation type="journal article" date="2008" name="Dev. Genes Evol.">
        <title>GBF-dependent family genes morphologically suppress the partially active Dictyostelium STATa strain.</title>
        <authorList>
            <person name="Shimada N."/>
            <person name="Kanno-Tanabe N."/>
            <person name="Minemura K."/>
            <person name="Kawata T."/>
        </authorList>
    </citation>
    <scope>DEVELOPMENTAL STAGE</scope>
</reference>
<comment type="developmental stage">
    <text evidence="2">Expressed specifically in prestalk A (pstA) cells.</text>
</comment>
<comment type="similarity">
    <text evidence="3">Belongs to the hssA/B family.</text>
</comment>
<accession>Q54BX4</accession>
<sequence length="93" mass="8379">MTILSAITSISRPNKASKSSVSSFGGASLSMGSNSVACGGCGGGSSGPRGPGGVAVGVAVDVNINLGVVVGGVLGLVGGILGGGGSSGSCGCH</sequence>
<keyword id="KW-1185">Reference proteome</keyword>
<protein>
    <recommendedName>
        <fullName>Protein hssA</fullName>
    </recommendedName>
    <alternativeName>
        <fullName>NK20</fullName>
    </alternativeName>
</protein>
<dbReference type="EMBL" id="AAFI02000203">
    <property type="protein sequence ID" value="EAL60769.1"/>
    <property type="molecule type" value="Genomic_DNA"/>
</dbReference>
<dbReference type="RefSeq" id="XP_629182.1">
    <property type="nucleotide sequence ID" value="XM_629180.1"/>
</dbReference>
<dbReference type="STRING" id="44689.Q54BX4"/>
<dbReference type="PaxDb" id="44689-DDB0230164"/>
<dbReference type="EnsemblProtists" id="EAL60769">
    <property type="protein sequence ID" value="EAL60769"/>
    <property type="gene ID" value="DDB_G0293360"/>
</dbReference>
<dbReference type="GeneID" id="8629181"/>
<dbReference type="KEGG" id="ddi:DDB_G0293360"/>
<dbReference type="dictyBase" id="DDB_G0293360">
    <property type="gene designation" value="hssA"/>
</dbReference>
<dbReference type="HOGENOM" id="CLU_181850_1_0_1"/>
<dbReference type="InParanoid" id="Q54BX4"/>
<dbReference type="PRO" id="PR:Q54BX4"/>
<dbReference type="Proteomes" id="UP000002195">
    <property type="component" value="Chromosome 6"/>
</dbReference>
<dbReference type="GO" id="GO:0030587">
    <property type="term" value="P:sorocarp development"/>
    <property type="evidence" value="ECO:0000316"/>
    <property type="project" value="dictyBase"/>
</dbReference>
<dbReference type="InterPro" id="IPR050533">
    <property type="entry name" value="HssA/B-like_chaperone"/>
</dbReference>
<dbReference type="InterPro" id="IPR008455">
    <property type="entry name" value="HssA/B-related"/>
</dbReference>
<dbReference type="PANTHER" id="PTHR31059">
    <property type="entry name" value="HSSA/B-LIKE PROTEIN 1-RELATED-RELATED"/>
    <property type="match status" value="1"/>
</dbReference>
<dbReference type="PANTHER" id="PTHR31059:SF5">
    <property type="entry name" value="HSSA_B-LIKE PROTEIN 1-RELATED"/>
    <property type="match status" value="1"/>
</dbReference>
<dbReference type="Pfam" id="PF05710">
    <property type="entry name" value="Coiled"/>
    <property type="match status" value="1"/>
</dbReference>
<organism>
    <name type="scientific">Dictyostelium discoideum</name>
    <name type="common">Social amoeba</name>
    <dbReference type="NCBI Taxonomy" id="44689"/>
    <lineage>
        <taxon>Eukaryota</taxon>
        <taxon>Amoebozoa</taxon>
        <taxon>Evosea</taxon>
        <taxon>Eumycetozoa</taxon>
        <taxon>Dictyostelia</taxon>
        <taxon>Dictyosteliales</taxon>
        <taxon>Dictyosteliaceae</taxon>
        <taxon>Dictyostelium</taxon>
    </lineage>
</organism>
<evidence type="ECO:0000256" key="1">
    <source>
        <dbReference type="SAM" id="MobiDB-lite"/>
    </source>
</evidence>
<evidence type="ECO:0000269" key="2">
    <source>
    </source>
</evidence>
<evidence type="ECO:0000305" key="3"/>
<feature type="chain" id="PRO_0000330369" description="Protein hssA">
    <location>
        <begin position="1"/>
        <end position="93"/>
    </location>
</feature>
<feature type="region of interest" description="Disordered" evidence="1">
    <location>
        <begin position="1"/>
        <end position="26"/>
    </location>
</feature>
<feature type="compositionally biased region" description="Polar residues" evidence="1">
    <location>
        <begin position="1"/>
        <end position="14"/>
    </location>
</feature>
<feature type="compositionally biased region" description="Low complexity" evidence="1">
    <location>
        <begin position="16"/>
        <end position="26"/>
    </location>
</feature>